<proteinExistence type="inferred from homology"/>
<sequence length="278" mass="29780">MTEIKVPIAGVIGNPITHSRSPHLHRHWLHVYGIEGYYVPLHVQGQDLAEVFHALPKLGFKGVNVTLPFKERAIELADRVSDRAALIGAANTITFQPDGTIHADNTDGYGFIENLRNGAPGWSPRAAAIVVLGAGGAARGVLSALLEAGAPEVRLANRTRAKAEALRSDFGPRVTVVDWHGVSGTMEDAETLVNTTSLGMTGQPDLELNLDALPRSAVVTDIVYRPLMTPLLEQAVARGNPVVDGLGMLLFQAAPGFERWFGVRPEITPELRAAALAE</sequence>
<keyword id="KW-0028">Amino-acid biosynthesis</keyword>
<keyword id="KW-0057">Aromatic amino acid biosynthesis</keyword>
<keyword id="KW-0521">NADP</keyword>
<keyword id="KW-0560">Oxidoreductase</keyword>
<keyword id="KW-1185">Reference proteome</keyword>
<evidence type="ECO:0000255" key="1">
    <source>
        <dbReference type="HAMAP-Rule" id="MF_00222"/>
    </source>
</evidence>
<feature type="chain" id="PRO_1000078120" description="Shikimate dehydrogenase (NADP(+))">
    <location>
        <begin position="1"/>
        <end position="278"/>
    </location>
</feature>
<feature type="active site" description="Proton acceptor" evidence="1">
    <location>
        <position position="70"/>
    </location>
</feature>
<feature type="binding site" evidence="1">
    <location>
        <begin position="19"/>
        <end position="21"/>
    </location>
    <ligand>
        <name>shikimate</name>
        <dbReference type="ChEBI" id="CHEBI:36208"/>
    </ligand>
</feature>
<feature type="binding site" evidence="1">
    <location>
        <position position="66"/>
    </location>
    <ligand>
        <name>shikimate</name>
        <dbReference type="ChEBI" id="CHEBI:36208"/>
    </ligand>
</feature>
<feature type="binding site" evidence="1">
    <location>
        <position position="82"/>
    </location>
    <ligand>
        <name>NADP(+)</name>
        <dbReference type="ChEBI" id="CHEBI:58349"/>
    </ligand>
</feature>
<feature type="binding site" evidence="1">
    <location>
        <position position="91"/>
    </location>
    <ligand>
        <name>shikimate</name>
        <dbReference type="ChEBI" id="CHEBI:36208"/>
    </ligand>
</feature>
<feature type="binding site" evidence="1">
    <location>
        <position position="107"/>
    </location>
    <ligand>
        <name>shikimate</name>
        <dbReference type="ChEBI" id="CHEBI:36208"/>
    </ligand>
</feature>
<feature type="binding site" evidence="1">
    <location>
        <begin position="133"/>
        <end position="137"/>
    </location>
    <ligand>
        <name>NADP(+)</name>
        <dbReference type="ChEBI" id="CHEBI:58349"/>
    </ligand>
</feature>
<feature type="binding site" evidence="1">
    <location>
        <begin position="157"/>
        <end position="162"/>
    </location>
    <ligand>
        <name>NADP(+)</name>
        <dbReference type="ChEBI" id="CHEBI:58349"/>
    </ligand>
</feature>
<feature type="binding site" evidence="1">
    <location>
        <position position="222"/>
    </location>
    <ligand>
        <name>NADP(+)</name>
        <dbReference type="ChEBI" id="CHEBI:58349"/>
    </ligand>
</feature>
<feature type="binding site" evidence="1">
    <location>
        <position position="224"/>
    </location>
    <ligand>
        <name>shikimate</name>
        <dbReference type="ChEBI" id="CHEBI:36208"/>
    </ligand>
</feature>
<feature type="binding site" evidence="1">
    <location>
        <position position="245"/>
    </location>
    <ligand>
        <name>NADP(+)</name>
        <dbReference type="ChEBI" id="CHEBI:58349"/>
    </ligand>
</feature>
<organism>
    <name type="scientific">Dinoroseobacter shibae (strain DSM 16493 / NCIMB 14021 / DFL 12)</name>
    <dbReference type="NCBI Taxonomy" id="398580"/>
    <lineage>
        <taxon>Bacteria</taxon>
        <taxon>Pseudomonadati</taxon>
        <taxon>Pseudomonadota</taxon>
        <taxon>Alphaproteobacteria</taxon>
        <taxon>Rhodobacterales</taxon>
        <taxon>Roseobacteraceae</taxon>
        <taxon>Dinoroseobacter</taxon>
    </lineage>
</organism>
<reference key="1">
    <citation type="journal article" date="2010" name="ISME J.">
        <title>The complete genome sequence of the algal symbiont Dinoroseobacter shibae: a hitchhiker's guide to life in the sea.</title>
        <authorList>
            <person name="Wagner-Dobler I."/>
            <person name="Ballhausen B."/>
            <person name="Berger M."/>
            <person name="Brinkhoff T."/>
            <person name="Buchholz I."/>
            <person name="Bunk B."/>
            <person name="Cypionka H."/>
            <person name="Daniel R."/>
            <person name="Drepper T."/>
            <person name="Gerdts G."/>
            <person name="Hahnke S."/>
            <person name="Han C."/>
            <person name="Jahn D."/>
            <person name="Kalhoefer D."/>
            <person name="Kiss H."/>
            <person name="Klenk H.P."/>
            <person name="Kyrpides N."/>
            <person name="Liebl W."/>
            <person name="Liesegang H."/>
            <person name="Meincke L."/>
            <person name="Pati A."/>
            <person name="Petersen J."/>
            <person name="Piekarski T."/>
            <person name="Pommerenke C."/>
            <person name="Pradella S."/>
            <person name="Pukall R."/>
            <person name="Rabus R."/>
            <person name="Stackebrandt E."/>
            <person name="Thole S."/>
            <person name="Thompson L."/>
            <person name="Tielen P."/>
            <person name="Tomasch J."/>
            <person name="von Jan M."/>
            <person name="Wanphrut N."/>
            <person name="Wichels A."/>
            <person name="Zech H."/>
            <person name="Simon M."/>
        </authorList>
    </citation>
    <scope>NUCLEOTIDE SEQUENCE [LARGE SCALE GENOMIC DNA]</scope>
    <source>
        <strain>DSM 16493 / NCIMB 14021 / DFL 12</strain>
    </source>
</reference>
<comment type="function">
    <text evidence="1">Involved in the biosynthesis of the chorismate, which leads to the biosynthesis of aromatic amino acids. Catalyzes the reversible NADPH linked reduction of 3-dehydroshikimate (DHSA) to yield shikimate (SA).</text>
</comment>
<comment type="catalytic activity">
    <reaction evidence="1">
        <text>shikimate + NADP(+) = 3-dehydroshikimate + NADPH + H(+)</text>
        <dbReference type="Rhea" id="RHEA:17737"/>
        <dbReference type="ChEBI" id="CHEBI:15378"/>
        <dbReference type="ChEBI" id="CHEBI:16630"/>
        <dbReference type="ChEBI" id="CHEBI:36208"/>
        <dbReference type="ChEBI" id="CHEBI:57783"/>
        <dbReference type="ChEBI" id="CHEBI:58349"/>
        <dbReference type="EC" id="1.1.1.25"/>
    </reaction>
</comment>
<comment type="pathway">
    <text evidence="1">Metabolic intermediate biosynthesis; chorismate biosynthesis; chorismate from D-erythrose 4-phosphate and phosphoenolpyruvate: step 4/7.</text>
</comment>
<comment type="subunit">
    <text evidence="1">Homodimer.</text>
</comment>
<comment type="similarity">
    <text evidence="1">Belongs to the shikimate dehydrogenase family.</text>
</comment>
<name>AROE_DINSH</name>
<dbReference type="EC" id="1.1.1.25" evidence="1"/>
<dbReference type="EMBL" id="CP000830">
    <property type="protein sequence ID" value="ABV95183.1"/>
    <property type="molecule type" value="Genomic_DNA"/>
</dbReference>
<dbReference type="RefSeq" id="WP_012180107.1">
    <property type="nucleotide sequence ID" value="NC_009952.1"/>
</dbReference>
<dbReference type="SMR" id="A8LPB8"/>
<dbReference type="STRING" id="398580.Dshi_3450"/>
<dbReference type="KEGG" id="dsh:Dshi_3450"/>
<dbReference type="eggNOG" id="COG0169">
    <property type="taxonomic scope" value="Bacteria"/>
</dbReference>
<dbReference type="HOGENOM" id="CLU_044063_2_0_5"/>
<dbReference type="OrthoDB" id="9792692at2"/>
<dbReference type="UniPathway" id="UPA00053">
    <property type="reaction ID" value="UER00087"/>
</dbReference>
<dbReference type="Proteomes" id="UP000006833">
    <property type="component" value="Chromosome"/>
</dbReference>
<dbReference type="GO" id="GO:0005829">
    <property type="term" value="C:cytosol"/>
    <property type="evidence" value="ECO:0007669"/>
    <property type="project" value="TreeGrafter"/>
</dbReference>
<dbReference type="GO" id="GO:0050661">
    <property type="term" value="F:NADP binding"/>
    <property type="evidence" value="ECO:0007669"/>
    <property type="project" value="InterPro"/>
</dbReference>
<dbReference type="GO" id="GO:0004764">
    <property type="term" value="F:shikimate 3-dehydrogenase (NADP+) activity"/>
    <property type="evidence" value="ECO:0007669"/>
    <property type="project" value="UniProtKB-UniRule"/>
</dbReference>
<dbReference type="GO" id="GO:0008652">
    <property type="term" value="P:amino acid biosynthetic process"/>
    <property type="evidence" value="ECO:0007669"/>
    <property type="project" value="UniProtKB-KW"/>
</dbReference>
<dbReference type="GO" id="GO:0009073">
    <property type="term" value="P:aromatic amino acid family biosynthetic process"/>
    <property type="evidence" value="ECO:0007669"/>
    <property type="project" value="UniProtKB-KW"/>
</dbReference>
<dbReference type="GO" id="GO:0009423">
    <property type="term" value="P:chorismate biosynthetic process"/>
    <property type="evidence" value="ECO:0007669"/>
    <property type="project" value="UniProtKB-UniRule"/>
</dbReference>
<dbReference type="GO" id="GO:0019632">
    <property type="term" value="P:shikimate metabolic process"/>
    <property type="evidence" value="ECO:0007669"/>
    <property type="project" value="InterPro"/>
</dbReference>
<dbReference type="CDD" id="cd01065">
    <property type="entry name" value="NAD_bind_Shikimate_DH"/>
    <property type="match status" value="1"/>
</dbReference>
<dbReference type="Gene3D" id="3.40.50.10860">
    <property type="entry name" value="Leucine Dehydrogenase, chain A, domain 1"/>
    <property type="match status" value="1"/>
</dbReference>
<dbReference type="Gene3D" id="3.40.50.720">
    <property type="entry name" value="NAD(P)-binding Rossmann-like Domain"/>
    <property type="match status" value="1"/>
</dbReference>
<dbReference type="HAMAP" id="MF_00222">
    <property type="entry name" value="Shikimate_DH_AroE"/>
    <property type="match status" value="1"/>
</dbReference>
<dbReference type="InterPro" id="IPR046346">
    <property type="entry name" value="Aminoacid_DH-like_N_sf"/>
</dbReference>
<dbReference type="InterPro" id="IPR036291">
    <property type="entry name" value="NAD(P)-bd_dom_sf"/>
</dbReference>
<dbReference type="InterPro" id="IPR041121">
    <property type="entry name" value="SDH_C"/>
</dbReference>
<dbReference type="InterPro" id="IPR011342">
    <property type="entry name" value="Shikimate_DH"/>
</dbReference>
<dbReference type="InterPro" id="IPR013708">
    <property type="entry name" value="Shikimate_DH-bd_N"/>
</dbReference>
<dbReference type="InterPro" id="IPR022893">
    <property type="entry name" value="Shikimate_DH_fam"/>
</dbReference>
<dbReference type="InterPro" id="IPR006151">
    <property type="entry name" value="Shikm_DH/Glu-tRNA_Rdtase"/>
</dbReference>
<dbReference type="NCBIfam" id="TIGR00507">
    <property type="entry name" value="aroE"/>
    <property type="match status" value="1"/>
</dbReference>
<dbReference type="NCBIfam" id="NF001310">
    <property type="entry name" value="PRK00258.1-2"/>
    <property type="match status" value="1"/>
</dbReference>
<dbReference type="NCBIfam" id="NF001312">
    <property type="entry name" value="PRK00258.1-4"/>
    <property type="match status" value="1"/>
</dbReference>
<dbReference type="PANTHER" id="PTHR21089:SF1">
    <property type="entry name" value="BIFUNCTIONAL 3-DEHYDROQUINATE DEHYDRATASE_SHIKIMATE DEHYDROGENASE, CHLOROPLASTIC"/>
    <property type="match status" value="1"/>
</dbReference>
<dbReference type="PANTHER" id="PTHR21089">
    <property type="entry name" value="SHIKIMATE DEHYDROGENASE"/>
    <property type="match status" value="1"/>
</dbReference>
<dbReference type="Pfam" id="PF18317">
    <property type="entry name" value="SDH_C"/>
    <property type="match status" value="1"/>
</dbReference>
<dbReference type="Pfam" id="PF01488">
    <property type="entry name" value="Shikimate_DH"/>
    <property type="match status" value="1"/>
</dbReference>
<dbReference type="Pfam" id="PF08501">
    <property type="entry name" value="Shikimate_dh_N"/>
    <property type="match status" value="1"/>
</dbReference>
<dbReference type="SUPFAM" id="SSF53223">
    <property type="entry name" value="Aminoacid dehydrogenase-like, N-terminal domain"/>
    <property type="match status" value="1"/>
</dbReference>
<dbReference type="SUPFAM" id="SSF51735">
    <property type="entry name" value="NAD(P)-binding Rossmann-fold domains"/>
    <property type="match status" value="1"/>
</dbReference>
<protein>
    <recommendedName>
        <fullName evidence="1">Shikimate dehydrogenase (NADP(+))</fullName>
        <shortName evidence="1">SDH</shortName>
        <ecNumber evidence="1">1.1.1.25</ecNumber>
    </recommendedName>
</protein>
<gene>
    <name evidence="1" type="primary">aroE</name>
    <name type="ordered locus">Dshi_3450</name>
</gene>
<accession>A8LPB8</accession>